<keyword id="KW-0167">Capsid protein</keyword>
<keyword id="KW-1152">Outer capsid protein</keyword>
<keyword id="KW-1185">Reference proteome</keyword>
<keyword id="KW-0946">Virion</keyword>
<comment type="subcellular location">
    <subcellularLocation>
        <location evidence="1">Virion</location>
    </subcellularLocation>
</comment>
<accession>Q1I0U7</accession>
<dbReference type="EMBL" id="DQ126105">
    <property type="protein sequence ID" value="AAZ94045.1"/>
    <property type="molecule type" value="Genomic_RNA"/>
</dbReference>
<dbReference type="RefSeq" id="YP_654548.1">
    <property type="nucleotide sequence ID" value="NC_008175.1"/>
</dbReference>
<dbReference type="KEGG" id="vg:5076667"/>
<dbReference type="Proteomes" id="UP000000349">
    <property type="component" value="Genome"/>
</dbReference>
<dbReference type="GO" id="GO:0039624">
    <property type="term" value="C:viral outer capsid"/>
    <property type="evidence" value="ECO:0007669"/>
    <property type="project" value="UniProtKB-KW"/>
</dbReference>
<sequence>MSSNATTRDFATTVAKALIAPGVCDTHGMSYPSIGAPKQLITVHGNASMTTDAGVTSVVAYLDPLSFRSGQLTATLVGRNGNLEPIQSTQVDIGTASSDFSAGSVLSLAITGENTSGDDSVSGTVAAGVTHDLIDDAQAMSHAKLERQTEYKDFVYKSAREGAVNAVAITPYLQGGSAYVGRGASTNKSSVKSVYTAGASGGLAALGFPAGLDGTATSGSTLTEKIMWHAKNVTADKARFLNGAAKVIEFDVSLASTAASTSTGAPPINYVIEYVDSTSETGVMVPAGAASAHAAFAAGRASFSITKPIKDIILKTSQANSQAVSSLVVSVTEQYECADIPEAPRAFVVFEGLKPGTSIVSVRCAATLAVTPSPENVSLMHRAPISTDVDYSLFFEFMTAFTRDAPMAFTPESRTQFLTMFDSPTSMRALQLAFDFDRGFRTVGRGLRNFARAAKETRHQASQIAKKVDPIFVAIKGEDIPFLSDAANLGHLAVRGAQRTTMLEAASYM</sequence>
<proteinExistence type="predicted"/>
<organism>
    <name type="scientific">Micromonas pusilla reovirus (isolate Netherlands/2005)</name>
    <name type="common">MpRV</name>
    <dbReference type="NCBI Taxonomy" id="649596"/>
    <lineage>
        <taxon>Viruses</taxon>
        <taxon>Riboviria</taxon>
        <taxon>Orthornavirae</taxon>
        <taxon>Duplornaviricota</taxon>
        <taxon>Resentoviricetes</taxon>
        <taxon>Reovirales</taxon>
        <taxon>Sedoreoviridae</taxon>
        <taxon>Mimoreovirus</taxon>
        <taxon>Micromonas pusilla reovirus</taxon>
    </lineage>
</organism>
<name>VP5_MPRVN</name>
<protein>
    <recommendedName>
        <fullName>Putative outer capsid protein VP5</fullName>
    </recommendedName>
</protein>
<gene>
    <name type="primary">S5</name>
</gene>
<reference key="1">
    <citation type="journal article" date="2006" name="J. Gen. Virol.">
        <title>Micromonas pusilla reovirus: a new member of the family Reoviridae assigned to a novel proposed genus (Mimoreovirus).</title>
        <authorList>
            <person name="Attoui H."/>
            <person name="Jaafar F.M."/>
            <person name="Belhouchet M."/>
            <person name="de Micco P."/>
            <person name="de Lamballerie X."/>
            <person name="Brussaard C.P."/>
        </authorList>
    </citation>
    <scope>NUCLEOTIDE SEQUENCE [GENOMIC RNA]</scope>
</reference>
<feature type="chain" id="PRO_0000404165" description="Putative outer capsid protein VP5">
    <location>
        <begin position="1"/>
        <end position="509"/>
    </location>
</feature>
<evidence type="ECO:0000305" key="1"/>
<organismHost>
    <name type="scientific">Micromonas pusilla</name>
    <name type="common">Picoplanktonic green alga</name>
    <name type="synonym">Chromulina pusilla</name>
    <dbReference type="NCBI Taxonomy" id="38833"/>
</organismHost>